<name>KTHY_LEUCK</name>
<comment type="function">
    <text evidence="1">Phosphorylation of dTMP to form dTDP in both de novo and salvage pathways of dTTP synthesis.</text>
</comment>
<comment type="catalytic activity">
    <reaction evidence="1">
        <text>dTMP + ATP = dTDP + ADP</text>
        <dbReference type="Rhea" id="RHEA:13517"/>
        <dbReference type="ChEBI" id="CHEBI:30616"/>
        <dbReference type="ChEBI" id="CHEBI:58369"/>
        <dbReference type="ChEBI" id="CHEBI:63528"/>
        <dbReference type="ChEBI" id="CHEBI:456216"/>
        <dbReference type="EC" id="2.7.4.9"/>
    </reaction>
</comment>
<comment type="similarity">
    <text evidence="1">Belongs to the thymidylate kinase family.</text>
</comment>
<accession>B1MVT4</accession>
<reference key="1">
    <citation type="journal article" date="2008" name="J. Bacteriol.">
        <title>Complete genome sequence of Leuconostoc citreum KM20.</title>
        <authorList>
            <person name="Kim J.F."/>
            <person name="Jeong H."/>
            <person name="Lee J.-S."/>
            <person name="Choi S.-H."/>
            <person name="Ha M."/>
            <person name="Hur C.-G."/>
            <person name="Kim J.-S."/>
            <person name="Lee S."/>
            <person name="Park H.-S."/>
            <person name="Park Y.-H."/>
            <person name="Oh T.K."/>
        </authorList>
    </citation>
    <scope>NUCLEOTIDE SEQUENCE [LARGE SCALE GENOMIC DNA]</scope>
    <source>
        <strain>KM20</strain>
    </source>
</reference>
<dbReference type="EC" id="2.7.4.9" evidence="1"/>
<dbReference type="EMBL" id="DQ489736">
    <property type="protein sequence ID" value="ACA83338.1"/>
    <property type="molecule type" value="Genomic_DNA"/>
</dbReference>
<dbReference type="RefSeq" id="WP_012305425.1">
    <property type="nucleotide sequence ID" value="NC_010471.1"/>
</dbReference>
<dbReference type="SMR" id="B1MVT4"/>
<dbReference type="STRING" id="349519.LCK_01514"/>
<dbReference type="GeneID" id="61101456"/>
<dbReference type="KEGG" id="lci:LCK_01514"/>
<dbReference type="eggNOG" id="COG0125">
    <property type="taxonomic scope" value="Bacteria"/>
</dbReference>
<dbReference type="HOGENOM" id="CLU_049131_0_2_9"/>
<dbReference type="OrthoDB" id="9774907at2"/>
<dbReference type="Proteomes" id="UP000002166">
    <property type="component" value="Chromosome"/>
</dbReference>
<dbReference type="GO" id="GO:0005829">
    <property type="term" value="C:cytosol"/>
    <property type="evidence" value="ECO:0007669"/>
    <property type="project" value="TreeGrafter"/>
</dbReference>
<dbReference type="GO" id="GO:0005524">
    <property type="term" value="F:ATP binding"/>
    <property type="evidence" value="ECO:0007669"/>
    <property type="project" value="UniProtKB-UniRule"/>
</dbReference>
<dbReference type="GO" id="GO:0004798">
    <property type="term" value="F:dTMP kinase activity"/>
    <property type="evidence" value="ECO:0007669"/>
    <property type="project" value="UniProtKB-UniRule"/>
</dbReference>
<dbReference type="GO" id="GO:0006233">
    <property type="term" value="P:dTDP biosynthetic process"/>
    <property type="evidence" value="ECO:0007669"/>
    <property type="project" value="InterPro"/>
</dbReference>
<dbReference type="GO" id="GO:0006235">
    <property type="term" value="P:dTTP biosynthetic process"/>
    <property type="evidence" value="ECO:0007669"/>
    <property type="project" value="UniProtKB-UniRule"/>
</dbReference>
<dbReference type="GO" id="GO:0006227">
    <property type="term" value="P:dUDP biosynthetic process"/>
    <property type="evidence" value="ECO:0007669"/>
    <property type="project" value="TreeGrafter"/>
</dbReference>
<dbReference type="CDD" id="cd01672">
    <property type="entry name" value="TMPK"/>
    <property type="match status" value="1"/>
</dbReference>
<dbReference type="FunFam" id="3.40.50.300:FF:000225">
    <property type="entry name" value="Thymidylate kinase"/>
    <property type="match status" value="1"/>
</dbReference>
<dbReference type="Gene3D" id="3.40.50.300">
    <property type="entry name" value="P-loop containing nucleotide triphosphate hydrolases"/>
    <property type="match status" value="1"/>
</dbReference>
<dbReference type="HAMAP" id="MF_00165">
    <property type="entry name" value="Thymidylate_kinase"/>
    <property type="match status" value="1"/>
</dbReference>
<dbReference type="InterPro" id="IPR027417">
    <property type="entry name" value="P-loop_NTPase"/>
</dbReference>
<dbReference type="InterPro" id="IPR039430">
    <property type="entry name" value="Thymidylate_kin-like_dom"/>
</dbReference>
<dbReference type="InterPro" id="IPR018095">
    <property type="entry name" value="Thymidylate_kin_CS"/>
</dbReference>
<dbReference type="InterPro" id="IPR018094">
    <property type="entry name" value="Thymidylate_kinase"/>
</dbReference>
<dbReference type="NCBIfam" id="TIGR00041">
    <property type="entry name" value="DTMP_kinase"/>
    <property type="match status" value="1"/>
</dbReference>
<dbReference type="PANTHER" id="PTHR10344">
    <property type="entry name" value="THYMIDYLATE KINASE"/>
    <property type="match status" value="1"/>
</dbReference>
<dbReference type="PANTHER" id="PTHR10344:SF4">
    <property type="entry name" value="UMP-CMP KINASE 2, MITOCHONDRIAL"/>
    <property type="match status" value="1"/>
</dbReference>
<dbReference type="Pfam" id="PF02223">
    <property type="entry name" value="Thymidylate_kin"/>
    <property type="match status" value="1"/>
</dbReference>
<dbReference type="SUPFAM" id="SSF52540">
    <property type="entry name" value="P-loop containing nucleoside triphosphate hydrolases"/>
    <property type="match status" value="1"/>
</dbReference>
<dbReference type="PROSITE" id="PS01331">
    <property type="entry name" value="THYMIDYLATE_KINASE"/>
    <property type="match status" value="1"/>
</dbReference>
<protein>
    <recommendedName>
        <fullName evidence="1">Thymidylate kinase</fullName>
        <ecNumber evidence="1">2.7.4.9</ecNumber>
    </recommendedName>
    <alternativeName>
        <fullName evidence="1">dTMP kinase</fullName>
    </alternativeName>
</protein>
<feature type="chain" id="PRO_1000097409" description="Thymidylate kinase">
    <location>
        <begin position="1"/>
        <end position="214"/>
    </location>
</feature>
<feature type="binding site" evidence="1">
    <location>
        <begin position="11"/>
        <end position="18"/>
    </location>
    <ligand>
        <name>ATP</name>
        <dbReference type="ChEBI" id="CHEBI:30616"/>
    </ligand>
</feature>
<keyword id="KW-0067">ATP-binding</keyword>
<keyword id="KW-0418">Kinase</keyword>
<keyword id="KW-0545">Nucleotide biosynthesis</keyword>
<keyword id="KW-0547">Nucleotide-binding</keyword>
<keyword id="KW-1185">Reference proteome</keyword>
<keyword id="KW-0808">Transferase</keyword>
<evidence type="ECO:0000255" key="1">
    <source>
        <dbReference type="HAMAP-Rule" id="MF_00165"/>
    </source>
</evidence>
<organism>
    <name type="scientific">Leuconostoc citreum (strain KM20)</name>
    <dbReference type="NCBI Taxonomy" id="349519"/>
    <lineage>
        <taxon>Bacteria</taxon>
        <taxon>Bacillati</taxon>
        <taxon>Bacillota</taxon>
        <taxon>Bacilli</taxon>
        <taxon>Lactobacillales</taxon>
        <taxon>Lactobacillaceae</taxon>
        <taxon>Leuconostoc</taxon>
    </lineage>
</organism>
<gene>
    <name evidence="1" type="primary">tmk</name>
    <name type="ordered locus">LCK_01514</name>
</gene>
<proteinExistence type="inferred from homology"/>
<sequence length="214" mass="23745">MTRPLFITFEGPEGAGKTSVLEALVSELKPILGDQLVTTREPGGNPISEAIRQILQPEDDNGMDDRTEALLYAAARRQHIVETILPALSAGKVLISDRYVDSSLAYQGGGRDLGVDNIWQINQFAIDGLLPDLTIYFDVPSELGLSRVMANRQGKIDRLDKESLSFHQRVRTTYLELQHDFSDRIKIIDATQPLTDVISDTRALLQEALNSRKG</sequence>